<comment type="function">
    <text evidence="1">Catalyzes the conversion of dihydroorotate to orotate with quinone as electron acceptor.</text>
</comment>
<comment type="catalytic activity">
    <reaction evidence="1">
        <text>(S)-dihydroorotate + a quinone = orotate + a quinol</text>
        <dbReference type="Rhea" id="RHEA:30187"/>
        <dbReference type="ChEBI" id="CHEBI:24646"/>
        <dbReference type="ChEBI" id="CHEBI:30839"/>
        <dbReference type="ChEBI" id="CHEBI:30864"/>
        <dbReference type="ChEBI" id="CHEBI:132124"/>
        <dbReference type="EC" id="1.3.5.2"/>
    </reaction>
</comment>
<comment type="cofactor">
    <cofactor evidence="1">
        <name>FMN</name>
        <dbReference type="ChEBI" id="CHEBI:58210"/>
    </cofactor>
    <text evidence="1">Binds 1 FMN per subunit.</text>
</comment>
<comment type="pathway">
    <text evidence="1">Pyrimidine metabolism; UMP biosynthesis via de novo pathway; orotate from (S)-dihydroorotate (quinone route): step 1/1.</text>
</comment>
<comment type="subunit">
    <text evidence="1">Monomer.</text>
</comment>
<comment type="subcellular location">
    <subcellularLocation>
        <location evidence="1">Cell membrane</location>
        <topology evidence="1">Peripheral membrane protein</topology>
    </subcellularLocation>
</comment>
<comment type="similarity">
    <text evidence="1">Belongs to the dihydroorotate dehydrogenase family. Type 2 subfamily.</text>
</comment>
<organism>
    <name type="scientific">Pseudomonas putida (strain W619)</name>
    <dbReference type="NCBI Taxonomy" id="390235"/>
    <lineage>
        <taxon>Bacteria</taxon>
        <taxon>Pseudomonadati</taxon>
        <taxon>Pseudomonadota</taxon>
        <taxon>Gammaproteobacteria</taxon>
        <taxon>Pseudomonadales</taxon>
        <taxon>Pseudomonadaceae</taxon>
        <taxon>Pseudomonas</taxon>
    </lineage>
</organism>
<gene>
    <name evidence="1" type="primary">pyrD</name>
    <name type="ordered locus">PputW619_1613</name>
</gene>
<sequence length="341" mass="35845">MYTLARQLLFKLSPETSHDLSLDLIGAGGRLGLNGVLCKQPAALPVSVMGLNFANPVGLAAGLDKNGAAIDGFAQLGFGFVEIGTVTPRAQPGNPKPRLFRLPEATAIINRMGFNNLGVDHLLERVRAARYDGVLGINIGKNFDTPVERAVDDYLICLNKVYGHASYITVNISSPNTPGLRSLQFGDSLKQLLDALAERREQLAGEHGKRVPLAIKIAPDMSDEETALVAATLMESGMDAVIATNTTMGREGVENLPYGGEAGGLSGAPVLEKSTHIVKVLSAELGGKMPIIAAGGITEGRHAAEKIAAGASLVQIYSGFIYRGPALIREAVDAIAAMPRA</sequence>
<protein>
    <recommendedName>
        <fullName evidence="1">Dihydroorotate dehydrogenase (quinone)</fullName>
        <ecNumber evidence="1">1.3.5.2</ecNumber>
    </recommendedName>
    <alternativeName>
        <fullName evidence="1">DHOdehase</fullName>
        <shortName evidence="1">DHOD</shortName>
        <shortName evidence="1">DHODase</shortName>
    </alternativeName>
    <alternativeName>
        <fullName evidence="1">Dihydroorotate oxidase</fullName>
    </alternativeName>
</protein>
<name>PYRD_PSEPW</name>
<feature type="chain" id="PRO_1000100276" description="Dihydroorotate dehydrogenase (quinone)">
    <location>
        <begin position="1"/>
        <end position="341"/>
    </location>
</feature>
<feature type="active site" description="Nucleophile" evidence="1">
    <location>
        <position position="174"/>
    </location>
</feature>
<feature type="binding site" evidence="1">
    <location>
        <begin position="61"/>
        <end position="65"/>
    </location>
    <ligand>
        <name>FMN</name>
        <dbReference type="ChEBI" id="CHEBI:58210"/>
    </ligand>
</feature>
<feature type="binding site" evidence="1">
    <location>
        <position position="65"/>
    </location>
    <ligand>
        <name>substrate</name>
    </ligand>
</feature>
<feature type="binding site" evidence="1">
    <location>
        <position position="85"/>
    </location>
    <ligand>
        <name>FMN</name>
        <dbReference type="ChEBI" id="CHEBI:58210"/>
    </ligand>
</feature>
<feature type="binding site" evidence="1">
    <location>
        <begin position="110"/>
        <end position="114"/>
    </location>
    <ligand>
        <name>substrate</name>
    </ligand>
</feature>
<feature type="binding site" evidence="1">
    <location>
        <position position="138"/>
    </location>
    <ligand>
        <name>FMN</name>
        <dbReference type="ChEBI" id="CHEBI:58210"/>
    </ligand>
</feature>
<feature type="binding site" evidence="1">
    <location>
        <position position="171"/>
    </location>
    <ligand>
        <name>FMN</name>
        <dbReference type="ChEBI" id="CHEBI:58210"/>
    </ligand>
</feature>
<feature type="binding site" evidence="1">
    <location>
        <position position="171"/>
    </location>
    <ligand>
        <name>substrate</name>
    </ligand>
</feature>
<feature type="binding site" evidence="1">
    <location>
        <position position="176"/>
    </location>
    <ligand>
        <name>substrate</name>
    </ligand>
</feature>
<feature type="binding site" evidence="1">
    <location>
        <position position="216"/>
    </location>
    <ligand>
        <name>FMN</name>
        <dbReference type="ChEBI" id="CHEBI:58210"/>
    </ligand>
</feature>
<feature type="binding site" evidence="1">
    <location>
        <position position="244"/>
    </location>
    <ligand>
        <name>FMN</name>
        <dbReference type="ChEBI" id="CHEBI:58210"/>
    </ligand>
</feature>
<feature type="binding site" evidence="1">
    <location>
        <begin position="245"/>
        <end position="246"/>
    </location>
    <ligand>
        <name>substrate</name>
    </ligand>
</feature>
<feature type="binding site" evidence="1">
    <location>
        <position position="267"/>
    </location>
    <ligand>
        <name>FMN</name>
        <dbReference type="ChEBI" id="CHEBI:58210"/>
    </ligand>
</feature>
<feature type="binding site" evidence="1">
    <location>
        <position position="296"/>
    </location>
    <ligand>
        <name>FMN</name>
        <dbReference type="ChEBI" id="CHEBI:58210"/>
    </ligand>
</feature>
<feature type="binding site" evidence="1">
    <location>
        <begin position="317"/>
        <end position="318"/>
    </location>
    <ligand>
        <name>FMN</name>
        <dbReference type="ChEBI" id="CHEBI:58210"/>
    </ligand>
</feature>
<proteinExistence type="inferred from homology"/>
<reference key="1">
    <citation type="submission" date="2008-02" db="EMBL/GenBank/DDBJ databases">
        <title>Complete sequence of Pseudomonas putida W619.</title>
        <authorList>
            <person name="Copeland A."/>
            <person name="Lucas S."/>
            <person name="Lapidus A."/>
            <person name="Barry K."/>
            <person name="Detter J.C."/>
            <person name="Glavina del Rio T."/>
            <person name="Dalin E."/>
            <person name="Tice H."/>
            <person name="Pitluck S."/>
            <person name="Chain P."/>
            <person name="Malfatti S."/>
            <person name="Shin M."/>
            <person name="Vergez L."/>
            <person name="Schmutz J."/>
            <person name="Larimer F."/>
            <person name="Land M."/>
            <person name="Hauser L."/>
            <person name="Kyrpides N."/>
            <person name="Kim E."/>
            <person name="Taghavi S."/>
            <person name="Vangronsveld D."/>
            <person name="van der Lelie D."/>
            <person name="Richardson P."/>
        </authorList>
    </citation>
    <scope>NUCLEOTIDE SEQUENCE [LARGE SCALE GENOMIC DNA]</scope>
    <source>
        <strain>W619</strain>
    </source>
</reference>
<dbReference type="EC" id="1.3.5.2" evidence="1"/>
<dbReference type="EMBL" id="CP000949">
    <property type="protein sequence ID" value="ACA72118.1"/>
    <property type="molecule type" value="Genomic_DNA"/>
</dbReference>
<dbReference type="SMR" id="B1J5B5"/>
<dbReference type="STRING" id="390235.PputW619_1613"/>
<dbReference type="KEGG" id="ppw:PputW619_1613"/>
<dbReference type="eggNOG" id="COG0167">
    <property type="taxonomic scope" value="Bacteria"/>
</dbReference>
<dbReference type="HOGENOM" id="CLU_013640_2_0_6"/>
<dbReference type="OrthoDB" id="9802377at2"/>
<dbReference type="UniPathway" id="UPA00070">
    <property type="reaction ID" value="UER00946"/>
</dbReference>
<dbReference type="GO" id="GO:0005737">
    <property type="term" value="C:cytoplasm"/>
    <property type="evidence" value="ECO:0007669"/>
    <property type="project" value="InterPro"/>
</dbReference>
<dbReference type="GO" id="GO:0005886">
    <property type="term" value="C:plasma membrane"/>
    <property type="evidence" value="ECO:0007669"/>
    <property type="project" value="UniProtKB-SubCell"/>
</dbReference>
<dbReference type="GO" id="GO:0106430">
    <property type="term" value="F:dihydroorotate dehydrogenase (quinone) activity"/>
    <property type="evidence" value="ECO:0007669"/>
    <property type="project" value="UniProtKB-EC"/>
</dbReference>
<dbReference type="GO" id="GO:0006207">
    <property type="term" value="P:'de novo' pyrimidine nucleobase biosynthetic process"/>
    <property type="evidence" value="ECO:0007669"/>
    <property type="project" value="InterPro"/>
</dbReference>
<dbReference type="GO" id="GO:0044205">
    <property type="term" value="P:'de novo' UMP biosynthetic process"/>
    <property type="evidence" value="ECO:0007669"/>
    <property type="project" value="UniProtKB-UniRule"/>
</dbReference>
<dbReference type="CDD" id="cd04738">
    <property type="entry name" value="DHOD_2_like"/>
    <property type="match status" value="1"/>
</dbReference>
<dbReference type="FunFam" id="3.20.20.70:FF:000028">
    <property type="entry name" value="Dihydroorotate dehydrogenase (quinone)"/>
    <property type="match status" value="1"/>
</dbReference>
<dbReference type="Gene3D" id="3.20.20.70">
    <property type="entry name" value="Aldolase class I"/>
    <property type="match status" value="1"/>
</dbReference>
<dbReference type="HAMAP" id="MF_00225">
    <property type="entry name" value="DHO_dh_type2"/>
    <property type="match status" value="1"/>
</dbReference>
<dbReference type="InterPro" id="IPR013785">
    <property type="entry name" value="Aldolase_TIM"/>
</dbReference>
<dbReference type="InterPro" id="IPR050074">
    <property type="entry name" value="DHO_dehydrogenase"/>
</dbReference>
<dbReference type="InterPro" id="IPR012135">
    <property type="entry name" value="Dihydroorotate_DH_1_2"/>
</dbReference>
<dbReference type="InterPro" id="IPR005719">
    <property type="entry name" value="Dihydroorotate_DH_2"/>
</dbReference>
<dbReference type="InterPro" id="IPR005720">
    <property type="entry name" value="Dihydroorotate_DH_cat"/>
</dbReference>
<dbReference type="InterPro" id="IPR001295">
    <property type="entry name" value="Dihydroorotate_DH_CS"/>
</dbReference>
<dbReference type="NCBIfam" id="NF003644">
    <property type="entry name" value="PRK05286.1-1"/>
    <property type="match status" value="1"/>
</dbReference>
<dbReference type="NCBIfam" id="NF003645">
    <property type="entry name" value="PRK05286.1-2"/>
    <property type="match status" value="1"/>
</dbReference>
<dbReference type="NCBIfam" id="NF003646">
    <property type="entry name" value="PRK05286.1-4"/>
    <property type="match status" value="1"/>
</dbReference>
<dbReference type="NCBIfam" id="NF003652">
    <property type="entry name" value="PRK05286.2-5"/>
    <property type="match status" value="1"/>
</dbReference>
<dbReference type="NCBIfam" id="TIGR01036">
    <property type="entry name" value="pyrD_sub2"/>
    <property type="match status" value="1"/>
</dbReference>
<dbReference type="PANTHER" id="PTHR48109:SF4">
    <property type="entry name" value="DIHYDROOROTATE DEHYDROGENASE (QUINONE), MITOCHONDRIAL"/>
    <property type="match status" value="1"/>
</dbReference>
<dbReference type="PANTHER" id="PTHR48109">
    <property type="entry name" value="DIHYDROOROTATE DEHYDROGENASE (QUINONE), MITOCHONDRIAL-RELATED"/>
    <property type="match status" value="1"/>
</dbReference>
<dbReference type="Pfam" id="PF01180">
    <property type="entry name" value="DHO_dh"/>
    <property type="match status" value="1"/>
</dbReference>
<dbReference type="PIRSF" id="PIRSF000164">
    <property type="entry name" value="DHO_oxidase"/>
    <property type="match status" value="1"/>
</dbReference>
<dbReference type="SUPFAM" id="SSF51395">
    <property type="entry name" value="FMN-linked oxidoreductases"/>
    <property type="match status" value="1"/>
</dbReference>
<dbReference type="PROSITE" id="PS00911">
    <property type="entry name" value="DHODEHASE_1"/>
    <property type="match status" value="1"/>
</dbReference>
<keyword id="KW-1003">Cell membrane</keyword>
<keyword id="KW-0285">Flavoprotein</keyword>
<keyword id="KW-0288">FMN</keyword>
<keyword id="KW-0472">Membrane</keyword>
<keyword id="KW-0560">Oxidoreductase</keyword>
<keyword id="KW-0665">Pyrimidine biosynthesis</keyword>
<accession>B1J5B5</accession>
<evidence type="ECO:0000255" key="1">
    <source>
        <dbReference type="HAMAP-Rule" id="MF_00225"/>
    </source>
</evidence>